<dbReference type="EC" id="3.6.4.13"/>
<dbReference type="EMBL" id="CR382126">
    <property type="protein sequence ID" value="CAG97833.1"/>
    <property type="molecule type" value="Genomic_DNA"/>
</dbReference>
<dbReference type="RefSeq" id="XP_455126.1">
    <property type="nucleotide sequence ID" value="XM_455126.1"/>
</dbReference>
<dbReference type="SMR" id="Q6CLR3"/>
<dbReference type="FunCoup" id="Q6CLR3">
    <property type="interactions" value="1448"/>
</dbReference>
<dbReference type="STRING" id="284590.Q6CLR3"/>
<dbReference type="PaxDb" id="284590-Q6CLR3"/>
<dbReference type="KEGG" id="kla:KLLA0_F01034g"/>
<dbReference type="eggNOG" id="KOG0335">
    <property type="taxonomic scope" value="Eukaryota"/>
</dbReference>
<dbReference type="HOGENOM" id="CLU_003041_16_3_1"/>
<dbReference type="InParanoid" id="Q6CLR3"/>
<dbReference type="OMA" id="CYRSWVR"/>
<dbReference type="Proteomes" id="UP000000598">
    <property type="component" value="Chromosome F"/>
</dbReference>
<dbReference type="GO" id="GO:0005737">
    <property type="term" value="C:cytoplasm"/>
    <property type="evidence" value="ECO:0007669"/>
    <property type="project" value="UniProtKB-SubCell"/>
</dbReference>
<dbReference type="GO" id="GO:0005524">
    <property type="term" value="F:ATP binding"/>
    <property type="evidence" value="ECO:0007669"/>
    <property type="project" value="UniProtKB-KW"/>
</dbReference>
<dbReference type="GO" id="GO:0016887">
    <property type="term" value="F:ATP hydrolysis activity"/>
    <property type="evidence" value="ECO:0007669"/>
    <property type="project" value="RHEA"/>
</dbReference>
<dbReference type="GO" id="GO:0003723">
    <property type="term" value="F:RNA binding"/>
    <property type="evidence" value="ECO:0007669"/>
    <property type="project" value="UniProtKB-KW"/>
</dbReference>
<dbReference type="GO" id="GO:0003724">
    <property type="term" value="F:RNA helicase activity"/>
    <property type="evidence" value="ECO:0007669"/>
    <property type="project" value="UniProtKB-EC"/>
</dbReference>
<dbReference type="GO" id="GO:0003743">
    <property type="term" value="F:translation initiation factor activity"/>
    <property type="evidence" value="ECO:0007669"/>
    <property type="project" value="UniProtKB-KW"/>
</dbReference>
<dbReference type="CDD" id="cd17967">
    <property type="entry name" value="DEADc_DDX3_DDX4"/>
    <property type="match status" value="1"/>
</dbReference>
<dbReference type="CDD" id="cd18787">
    <property type="entry name" value="SF2_C_DEAD"/>
    <property type="match status" value="1"/>
</dbReference>
<dbReference type="FunFam" id="3.40.50.300:FF:000008">
    <property type="entry name" value="ATP-dependent RNA helicase RhlB"/>
    <property type="match status" value="1"/>
</dbReference>
<dbReference type="FunFam" id="3.40.50.300:FF:000397">
    <property type="entry name" value="Probable ATP-dependent RNA helicase DDX4"/>
    <property type="match status" value="1"/>
</dbReference>
<dbReference type="Gene3D" id="3.40.50.300">
    <property type="entry name" value="P-loop containing nucleotide triphosphate hydrolases"/>
    <property type="match status" value="2"/>
</dbReference>
<dbReference type="InterPro" id="IPR011545">
    <property type="entry name" value="DEAD/DEAH_box_helicase_dom"/>
</dbReference>
<dbReference type="InterPro" id="IPR044763">
    <property type="entry name" value="Ded1/Dbp1_DEADc"/>
</dbReference>
<dbReference type="InterPro" id="IPR014001">
    <property type="entry name" value="Helicase_ATP-bd"/>
</dbReference>
<dbReference type="InterPro" id="IPR001650">
    <property type="entry name" value="Helicase_C-like"/>
</dbReference>
<dbReference type="InterPro" id="IPR027417">
    <property type="entry name" value="P-loop_NTPase"/>
</dbReference>
<dbReference type="InterPro" id="IPR000629">
    <property type="entry name" value="RNA-helicase_DEAD-box_CS"/>
</dbReference>
<dbReference type="InterPro" id="IPR014014">
    <property type="entry name" value="RNA_helicase_DEAD_Q_motif"/>
</dbReference>
<dbReference type="PANTHER" id="PTHR47958">
    <property type="entry name" value="ATP-DEPENDENT RNA HELICASE DBP3"/>
    <property type="match status" value="1"/>
</dbReference>
<dbReference type="Pfam" id="PF00270">
    <property type="entry name" value="DEAD"/>
    <property type="match status" value="1"/>
</dbReference>
<dbReference type="Pfam" id="PF00271">
    <property type="entry name" value="Helicase_C"/>
    <property type="match status" value="1"/>
</dbReference>
<dbReference type="SMART" id="SM00487">
    <property type="entry name" value="DEXDc"/>
    <property type="match status" value="1"/>
</dbReference>
<dbReference type="SMART" id="SM00490">
    <property type="entry name" value="HELICc"/>
    <property type="match status" value="1"/>
</dbReference>
<dbReference type="SUPFAM" id="SSF52540">
    <property type="entry name" value="P-loop containing nucleoside triphosphate hydrolases"/>
    <property type="match status" value="1"/>
</dbReference>
<dbReference type="PROSITE" id="PS00039">
    <property type="entry name" value="DEAD_ATP_HELICASE"/>
    <property type="match status" value="1"/>
</dbReference>
<dbReference type="PROSITE" id="PS51192">
    <property type="entry name" value="HELICASE_ATP_BIND_1"/>
    <property type="match status" value="1"/>
</dbReference>
<dbReference type="PROSITE" id="PS51194">
    <property type="entry name" value="HELICASE_CTER"/>
    <property type="match status" value="1"/>
</dbReference>
<dbReference type="PROSITE" id="PS51195">
    <property type="entry name" value="Q_MOTIF"/>
    <property type="match status" value="1"/>
</dbReference>
<accession>Q6CLR3</accession>
<protein>
    <recommendedName>
        <fullName>ATP-dependent RNA helicase DED1</fullName>
        <ecNumber>3.6.4.13</ecNumber>
    </recommendedName>
</protein>
<name>DED1_KLULA</name>
<sequence>MSDIAENMSNLSVQDNDSGATSGDSRRSYVPPHVRGQQRSGSGNYRGRSDNFGGNERSFFGNERRGGGYSRGGRGSVNWGGSNWGGRNDSRGSGGYGGGNSSGRWIDGKHVPAAKNANLELELFGVAEDKSFQSSGINFDNYDDIPVEASGNDVPEPISEFHSPPLDPLLLDNIKLARFTKPTPVQKYSVPIVAAGRDLMACAQTGSGKTGGFLFPVLSESFSSGPASTPEAAGNSYIKKVYPTAVILAPTRELATQIYDEAKKFTYRSWVKPMVVYGGASIDNQIKQMRYGCNLLVATPGRLTDLLERRYISLANVKYLVLDEADRMLDMGFEPQIRRIVEGSDMPSVDNRQTLMFSATFPSEIQHLASDFLKDYVFLSVGRVGSTSENITQKILYVEDFDKNDTLLDLLAASNEGLTLIFVETKRAADSLTDFLIMEGFKATAIHGDRTQGERERALSAFKTGRATILVATAVAARGLDIPNVTHVINFDLPNDIDDYVHRIGRTGRAGNTGVATTFFNRGNKNVAKELVSLLSEANQEVPSFLTTIMREASSGRGGARGGRGGYNRGNSTRDFRRGGAPSGGFSSGGGSSGGWGNGGGSSGGWGNSSGNWGNSSNSSNSNSGWW</sequence>
<organism>
    <name type="scientific">Kluyveromyces lactis (strain ATCC 8585 / CBS 2359 / DSM 70799 / NBRC 1267 / NRRL Y-1140 / WM37)</name>
    <name type="common">Yeast</name>
    <name type="synonym">Candida sphaerica</name>
    <dbReference type="NCBI Taxonomy" id="284590"/>
    <lineage>
        <taxon>Eukaryota</taxon>
        <taxon>Fungi</taxon>
        <taxon>Dikarya</taxon>
        <taxon>Ascomycota</taxon>
        <taxon>Saccharomycotina</taxon>
        <taxon>Saccharomycetes</taxon>
        <taxon>Saccharomycetales</taxon>
        <taxon>Saccharomycetaceae</taxon>
        <taxon>Kluyveromyces</taxon>
    </lineage>
</organism>
<evidence type="ECO:0000250" key="1"/>
<evidence type="ECO:0000255" key="2">
    <source>
        <dbReference type="PROSITE-ProRule" id="PRU00541"/>
    </source>
</evidence>
<evidence type="ECO:0000255" key="3">
    <source>
        <dbReference type="PROSITE-ProRule" id="PRU00542"/>
    </source>
</evidence>
<evidence type="ECO:0000256" key="4">
    <source>
        <dbReference type="SAM" id="MobiDB-lite"/>
    </source>
</evidence>
<evidence type="ECO:0000305" key="5"/>
<feature type="chain" id="PRO_0000232160" description="ATP-dependent RNA helicase DED1">
    <location>
        <begin position="1"/>
        <end position="627"/>
    </location>
</feature>
<feature type="domain" description="Helicase ATP-binding" evidence="2">
    <location>
        <begin position="190"/>
        <end position="379"/>
    </location>
</feature>
<feature type="domain" description="Helicase C-terminal" evidence="3">
    <location>
        <begin position="406"/>
        <end position="550"/>
    </location>
</feature>
<feature type="region of interest" description="Disordered" evidence="4">
    <location>
        <begin position="1"/>
        <end position="96"/>
    </location>
</feature>
<feature type="region of interest" description="Disordered" evidence="4">
    <location>
        <begin position="553"/>
        <end position="627"/>
    </location>
</feature>
<feature type="short sequence motif" description="Q motif">
    <location>
        <begin position="159"/>
        <end position="187"/>
    </location>
</feature>
<feature type="short sequence motif" description="DEAD box">
    <location>
        <begin position="323"/>
        <end position="326"/>
    </location>
</feature>
<feature type="compositionally biased region" description="Polar residues" evidence="4">
    <location>
        <begin position="7"/>
        <end position="23"/>
    </location>
</feature>
<feature type="compositionally biased region" description="Low complexity" evidence="4">
    <location>
        <begin position="76"/>
        <end position="87"/>
    </location>
</feature>
<feature type="compositionally biased region" description="Gly residues" evidence="4">
    <location>
        <begin position="556"/>
        <end position="568"/>
    </location>
</feature>
<feature type="compositionally biased region" description="Gly residues" evidence="4">
    <location>
        <begin position="581"/>
        <end position="608"/>
    </location>
</feature>
<feature type="compositionally biased region" description="Low complexity" evidence="4">
    <location>
        <begin position="609"/>
        <end position="627"/>
    </location>
</feature>
<feature type="binding site" evidence="2">
    <location>
        <begin position="203"/>
        <end position="210"/>
    </location>
    <ligand>
        <name>ATP</name>
        <dbReference type="ChEBI" id="CHEBI:30616"/>
    </ligand>
</feature>
<comment type="function">
    <text evidence="1">ATP-binding RNA helicase involved in translation initiation. Remodels RNA in response to ADP and ATP concentrations by facilitating disruption, but also formation of RNA duplexes (By similarity).</text>
</comment>
<comment type="catalytic activity">
    <reaction>
        <text>ATP + H2O = ADP + phosphate + H(+)</text>
        <dbReference type="Rhea" id="RHEA:13065"/>
        <dbReference type="ChEBI" id="CHEBI:15377"/>
        <dbReference type="ChEBI" id="CHEBI:15378"/>
        <dbReference type="ChEBI" id="CHEBI:30616"/>
        <dbReference type="ChEBI" id="CHEBI:43474"/>
        <dbReference type="ChEBI" id="CHEBI:456216"/>
        <dbReference type="EC" id="3.6.4.13"/>
    </reaction>
</comment>
<comment type="subcellular location">
    <subcellularLocation>
        <location evidence="1">Cytoplasm</location>
    </subcellularLocation>
</comment>
<comment type="domain">
    <text>The Q motif is unique to and characteristic of the DEAD box family of RNA helicases and controls ATP binding and hydrolysis.</text>
</comment>
<comment type="similarity">
    <text evidence="5">Belongs to the DEAD box helicase family. DDX3/DED1 subfamily.</text>
</comment>
<keyword id="KW-0067">ATP-binding</keyword>
<keyword id="KW-0963">Cytoplasm</keyword>
<keyword id="KW-0347">Helicase</keyword>
<keyword id="KW-0378">Hydrolase</keyword>
<keyword id="KW-0396">Initiation factor</keyword>
<keyword id="KW-0547">Nucleotide-binding</keyword>
<keyword id="KW-0648">Protein biosynthesis</keyword>
<keyword id="KW-1185">Reference proteome</keyword>
<keyword id="KW-0694">RNA-binding</keyword>
<proteinExistence type="inferred from homology"/>
<gene>
    <name type="primary">DED1</name>
    <name type="ordered locus">KLLA0F01034g</name>
</gene>
<reference key="1">
    <citation type="journal article" date="2004" name="Nature">
        <title>Genome evolution in yeasts.</title>
        <authorList>
            <person name="Dujon B."/>
            <person name="Sherman D."/>
            <person name="Fischer G."/>
            <person name="Durrens P."/>
            <person name="Casaregola S."/>
            <person name="Lafontaine I."/>
            <person name="de Montigny J."/>
            <person name="Marck C."/>
            <person name="Neuveglise C."/>
            <person name="Talla E."/>
            <person name="Goffard N."/>
            <person name="Frangeul L."/>
            <person name="Aigle M."/>
            <person name="Anthouard V."/>
            <person name="Babour A."/>
            <person name="Barbe V."/>
            <person name="Barnay S."/>
            <person name="Blanchin S."/>
            <person name="Beckerich J.-M."/>
            <person name="Beyne E."/>
            <person name="Bleykasten C."/>
            <person name="Boisrame A."/>
            <person name="Boyer J."/>
            <person name="Cattolico L."/>
            <person name="Confanioleri F."/>
            <person name="de Daruvar A."/>
            <person name="Despons L."/>
            <person name="Fabre E."/>
            <person name="Fairhead C."/>
            <person name="Ferry-Dumazet H."/>
            <person name="Groppi A."/>
            <person name="Hantraye F."/>
            <person name="Hennequin C."/>
            <person name="Jauniaux N."/>
            <person name="Joyet P."/>
            <person name="Kachouri R."/>
            <person name="Kerrest A."/>
            <person name="Koszul R."/>
            <person name="Lemaire M."/>
            <person name="Lesur I."/>
            <person name="Ma L."/>
            <person name="Muller H."/>
            <person name="Nicaud J.-M."/>
            <person name="Nikolski M."/>
            <person name="Oztas S."/>
            <person name="Ozier-Kalogeropoulos O."/>
            <person name="Pellenz S."/>
            <person name="Potier S."/>
            <person name="Richard G.-F."/>
            <person name="Straub M.-L."/>
            <person name="Suleau A."/>
            <person name="Swennen D."/>
            <person name="Tekaia F."/>
            <person name="Wesolowski-Louvel M."/>
            <person name="Westhof E."/>
            <person name="Wirth B."/>
            <person name="Zeniou-Meyer M."/>
            <person name="Zivanovic Y."/>
            <person name="Bolotin-Fukuhara M."/>
            <person name="Thierry A."/>
            <person name="Bouchier C."/>
            <person name="Caudron B."/>
            <person name="Scarpelli C."/>
            <person name="Gaillardin C."/>
            <person name="Weissenbach J."/>
            <person name="Wincker P."/>
            <person name="Souciet J.-L."/>
        </authorList>
    </citation>
    <scope>NUCLEOTIDE SEQUENCE [LARGE SCALE GENOMIC DNA]</scope>
    <source>
        <strain>ATCC 8585 / CBS 2359 / DSM 70799 / NBRC 1267 / NRRL Y-1140 / WM37</strain>
    </source>
</reference>